<proteinExistence type="inferred from homology"/>
<accession>C4ZYA5</accession>
<name>SLYA_ECOBW</name>
<feature type="chain" id="PRO_1000216022" description="Transcriptional regulator SlyA">
    <location>
        <begin position="1"/>
        <end position="144"/>
    </location>
</feature>
<feature type="domain" description="HTH marR-type" evidence="1">
    <location>
        <begin position="2"/>
        <end position="135"/>
    </location>
</feature>
<feature type="DNA-binding region" description="H-T-H motif" evidence="1">
    <location>
        <begin position="49"/>
        <end position="72"/>
    </location>
</feature>
<evidence type="ECO:0000255" key="1">
    <source>
        <dbReference type="HAMAP-Rule" id="MF_01819"/>
    </source>
</evidence>
<sequence length="144" mass="16353">MESPLGSDLARLVRIWRALIDHRLKPLELTQTHWVTLHNIHQLPPDQSQIQLAKAIGIEQPSLVRTLDQLEEKGLISRQTCASDRRAKRIKLTEKAEPLISEMEAVINKTRAEILHGISAEELEQLITLIAKLEHNIIELQAKG</sequence>
<protein>
    <recommendedName>
        <fullName evidence="1">Transcriptional regulator SlyA</fullName>
    </recommendedName>
</protein>
<keyword id="KW-0010">Activator</keyword>
<keyword id="KW-0238">DNA-binding</keyword>
<keyword id="KW-0678">Repressor</keyword>
<keyword id="KW-0804">Transcription</keyword>
<keyword id="KW-0805">Transcription regulation</keyword>
<gene>
    <name evidence="1" type="primary">slyA</name>
    <name type="ordered locus">BWG_1457</name>
</gene>
<comment type="function">
    <text evidence="1">Transcription regulator that can specifically activate or repress expression of target genes.</text>
</comment>
<comment type="subunit">
    <text evidence="1">Homodimer.</text>
</comment>
<comment type="similarity">
    <text evidence="1">Belongs to the SlyA family.</text>
</comment>
<reference key="1">
    <citation type="journal article" date="2009" name="J. Bacteriol.">
        <title>Genomic sequencing reveals regulatory mutations and recombinational events in the widely used MC4100 lineage of Escherichia coli K-12.</title>
        <authorList>
            <person name="Ferenci T."/>
            <person name="Zhou Z."/>
            <person name="Betteridge T."/>
            <person name="Ren Y."/>
            <person name="Liu Y."/>
            <person name="Feng L."/>
            <person name="Reeves P.R."/>
            <person name="Wang L."/>
        </authorList>
    </citation>
    <scope>NUCLEOTIDE SEQUENCE [LARGE SCALE GENOMIC DNA]</scope>
    <source>
        <strain>K12 / MC4100 / BW2952</strain>
    </source>
</reference>
<dbReference type="EMBL" id="CP001396">
    <property type="protein sequence ID" value="ACR62874.1"/>
    <property type="molecule type" value="Genomic_DNA"/>
</dbReference>
<dbReference type="RefSeq" id="WP_001296943.1">
    <property type="nucleotide sequence ID" value="NC_012759.1"/>
</dbReference>
<dbReference type="SMR" id="C4ZYA5"/>
<dbReference type="GeneID" id="93775796"/>
<dbReference type="KEGG" id="ebw:BWG_1457"/>
<dbReference type="HOGENOM" id="CLU_083287_18_2_6"/>
<dbReference type="GO" id="GO:0003677">
    <property type="term" value="F:DNA binding"/>
    <property type="evidence" value="ECO:0007669"/>
    <property type="project" value="UniProtKB-UniRule"/>
</dbReference>
<dbReference type="GO" id="GO:0003700">
    <property type="term" value="F:DNA-binding transcription factor activity"/>
    <property type="evidence" value="ECO:0007669"/>
    <property type="project" value="UniProtKB-UniRule"/>
</dbReference>
<dbReference type="GO" id="GO:0006950">
    <property type="term" value="P:response to stress"/>
    <property type="evidence" value="ECO:0007669"/>
    <property type="project" value="TreeGrafter"/>
</dbReference>
<dbReference type="FunFam" id="1.10.10.10:FF:000261">
    <property type="entry name" value="Transcriptional regulator SlyA"/>
    <property type="match status" value="1"/>
</dbReference>
<dbReference type="Gene3D" id="1.10.10.10">
    <property type="entry name" value="Winged helix-like DNA-binding domain superfamily/Winged helix DNA-binding domain"/>
    <property type="match status" value="1"/>
</dbReference>
<dbReference type="HAMAP" id="MF_01819">
    <property type="entry name" value="HTH_type_SlyA"/>
    <property type="match status" value="1"/>
</dbReference>
<dbReference type="InterPro" id="IPR000835">
    <property type="entry name" value="HTH_MarR-typ"/>
</dbReference>
<dbReference type="InterPro" id="IPR039422">
    <property type="entry name" value="MarR/SlyA-like"/>
</dbReference>
<dbReference type="InterPro" id="IPR023187">
    <property type="entry name" value="Tscrpt_reg_MarR-type_CS"/>
</dbReference>
<dbReference type="InterPro" id="IPR023071">
    <property type="entry name" value="Tscrpt_reg_SlyA"/>
</dbReference>
<dbReference type="InterPro" id="IPR036388">
    <property type="entry name" value="WH-like_DNA-bd_sf"/>
</dbReference>
<dbReference type="InterPro" id="IPR036390">
    <property type="entry name" value="WH_DNA-bd_sf"/>
</dbReference>
<dbReference type="NCBIfam" id="NF002926">
    <property type="entry name" value="PRK03573.1"/>
    <property type="match status" value="1"/>
</dbReference>
<dbReference type="PANTHER" id="PTHR33164:SF64">
    <property type="entry name" value="TRANSCRIPTIONAL REGULATOR SLYA"/>
    <property type="match status" value="1"/>
</dbReference>
<dbReference type="PANTHER" id="PTHR33164">
    <property type="entry name" value="TRANSCRIPTIONAL REGULATOR, MARR FAMILY"/>
    <property type="match status" value="1"/>
</dbReference>
<dbReference type="Pfam" id="PF01047">
    <property type="entry name" value="MarR"/>
    <property type="match status" value="1"/>
</dbReference>
<dbReference type="PRINTS" id="PR00598">
    <property type="entry name" value="HTHMARR"/>
</dbReference>
<dbReference type="SMART" id="SM00347">
    <property type="entry name" value="HTH_MARR"/>
    <property type="match status" value="1"/>
</dbReference>
<dbReference type="SUPFAM" id="SSF46785">
    <property type="entry name" value="Winged helix' DNA-binding domain"/>
    <property type="match status" value="1"/>
</dbReference>
<dbReference type="PROSITE" id="PS01117">
    <property type="entry name" value="HTH_MARR_1"/>
    <property type="match status" value="1"/>
</dbReference>
<dbReference type="PROSITE" id="PS50995">
    <property type="entry name" value="HTH_MARR_2"/>
    <property type="match status" value="1"/>
</dbReference>
<organism>
    <name type="scientific">Escherichia coli (strain K12 / MC4100 / BW2952)</name>
    <dbReference type="NCBI Taxonomy" id="595496"/>
    <lineage>
        <taxon>Bacteria</taxon>
        <taxon>Pseudomonadati</taxon>
        <taxon>Pseudomonadota</taxon>
        <taxon>Gammaproteobacteria</taxon>
        <taxon>Enterobacterales</taxon>
        <taxon>Enterobacteriaceae</taxon>
        <taxon>Escherichia</taxon>
    </lineage>
</organism>